<gene>
    <name type="primary">Phyh</name>
    <name type="synonym">Ln1</name>
    <name type="synonym">Lnap1</name>
    <name type="synonym">Pahx</name>
</gene>
<accession>O35386</accession>
<accession>O08527</accession>
<keyword id="KW-0223">Dioxygenase</keyword>
<keyword id="KW-0408">Iron</keyword>
<keyword id="KW-0479">Metal-binding</keyword>
<keyword id="KW-0560">Oxidoreductase</keyword>
<keyword id="KW-0576">Peroxisome</keyword>
<keyword id="KW-1185">Reference proteome</keyword>
<keyword id="KW-0809">Transit peptide</keyword>
<keyword id="KW-0847">Vitamin C</keyword>
<proteinExistence type="evidence at protein level"/>
<name>PAHX_MOUSE</name>
<sequence length="338" mass="38607">MNLTRAGARLQVLLGHLGRPSAPTIVAQPVSGLASPASFQPEQFQYTLDNNVLTLEQRKFYEENGFLVIKNLVSDDDIQRFRAEFERICREEVKPPGIVIMRDVALAKQDYMPSDRMVSKIQDFQEDEELFRYCLLPEILKYVECFTGPNIMALHGMLINKPPDVGKKTSRHPLHQDLHYFPFRPSNLIVCAWTAMEHIDRNNGCLVVLPGTHKGTLKPHDYPKWEGGVNKMYHGIQDYDPNSPRVHLVMEKGDTVFFHPLLIHGSGRNKTQGFRKAISCHFGSSDCQCIDVSGTSQENIAREVVEMAEKKYGFQGVMDFKDTWIFRSRLVKGERINI</sequence>
<comment type="function">
    <text evidence="1">Catalyzes the 2-hydroxylation of not only racemic phytanoyl-CoA and the isomers of 3-methylhexadecanoyl-CoA, but also a variety of other mono-branched 3-methylacyl-CoA esters (with a chain length of at least seven carbon atoms) and straight-chain acyl-CoA esters (with a chain length longer than four carbon atoms) (By similarity). Does not hydroxylate long and very long straight chain acyl-CoAs or 2-methyl-and 4-methyl-branched acyl-CoAs (By similarity).</text>
</comment>
<comment type="catalytic activity">
    <reaction evidence="1">
        <text>phytanoyl-CoA + 2-oxoglutarate + O2 = 2-hydroxyphytanoyl-CoA + succinate + CO2</text>
        <dbReference type="Rhea" id="RHEA:16065"/>
        <dbReference type="ChEBI" id="CHEBI:15379"/>
        <dbReference type="ChEBI" id="CHEBI:16526"/>
        <dbReference type="ChEBI" id="CHEBI:16810"/>
        <dbReference type="ChEBI" id="CHEBI:30031"/>
        <dbReference type="ChEBI" id="CHEBI:57334"/>
        <dbReference type="ChEBI" id="CHEBI:57391"/>
        <dbReference type="EC" id="1.14.11.18"/>
    </reaction>
    <physiologicalReaction direction="left-to-right" evidence="1">
        <dbReference type="Rhea" id="RHEA:16066"/>
    </physiologicalReaction>
</comment>
<comment type="catalytic activity">
    <reaction evidence="1">
        <text>3-methylhexadecanoyl-CoA + 2-oxoglutarate + O2 = 2-hydroxy-3-methylhexadecanoyl-CoA + succinate + CO2</text>
        <dbReference type="Rhea" id="RHEA:44000"/>
        <dbReference type="ChEBI" id="CHEBI:15379"/>
        <dbReference type="ChEBI" id="CHEBI:16526"/>
        <dbReference type="ChEBI" id="CHEBI:16810"/>
        <dbReference type="ChEBI" id="CHEBI:30031"/>
        <dbReference type="ChEBI" id="CHEBI:58784"/>
        <dbReference type="ChEBI" id="CHEBI:83969"/>
    </reaction>
    <physiologicalReaction direction="left-to-right" evidence="1">
        <dbReference type="Rhea" id="RHEA:44001"/>
    </physiologicalReaction>
</comment>
<comment type="catalytic activity">
    <reaction evidence="1">
        <text>hexadecanoyl-CoA + 2-oxoglutarate + O2 = 2-hydroxyhexadecanoyl-CoA + succinate + CO2</text>
        <dbReference type="Rhea" id="RHEA:54596"/>
        <dbReference type="ChEBI" id="CHEBI:15379"/>
        <dbReference type="ChEBI" id="CHEBI:16526"/>
        <dbReference type="ChEBI" id="CHEBI:16810"/>
        <dbReference type="ChEBI" id="CHEBI:30031"/>
        <dbReference type="ChEBI" id="CHEBI:57379"/>
        <dbReference type="ChEBI" id="CHEBI:74115"/>
    </reaction>
    <physiologicalReaction direction="left-to-right" evidence="1">
        <dbReference type="Rhea" id="RHEA:54597"/>
    </physiologicalReaction>
</comment>
<comment type="catalytic activity">
    <reaction evidence="1">
        <text>octanoyl-CoA + 2-oxoglutarate + O2 = 2-hydroxyoctanoyl-CoA + succinate + CO2</text>
        <dbReference type="Rhea" id="RHEA:54600"/>
        <dbReference type="ChEBI" id="CHEBI:15379"/>
        <dbReference type="ChEBI" id="CHEBI:16526"/>
        <dbReference type="ChEBI" id="CHEBI:16810"/>
        <dbReference type="ChEBI" id="CHEBI:30031"/>
        <dbReference type="ChEBI" id="CHEBI:57386"/>
        <dbReference type="ChEBI" id="CHEBI:138290"/>
    </reaction>
    <physiologicalReaction direction="left-to-right" evidence="1">
        <dbReference type="Rhea" id="RHEA:54601"/>
    </physiologicalReaction>
</comment>
<comment type="catalytic activity">
    <reaction evidence="1">
        <text>decanoyl-CoA + 2-oxoglutarate + O2 = 2-hydroxydecanoyl-CoA + succinate + CO2</text>
        <dbReference type="Rhea" id="RHEA:54604"/>
        <dbReference type="ChEBI" id="CHEBI:15379"/>
        <dbReference type="ChEBI" id="CHEBI:16526"/>
        <dbReference type="ChEBI" id="CHEBI:16810"/>
        <dbReference type="ChEBI" id="CHEBI:30031"/>
        <dbReference type="ChEBI" id="CHEBI:61430"/>
        <dbReference type="ChEBI" id="CHEBI:138292"/>
    </reaction>
    <physiologicalReaction direction="left-to-right" evidence="1">
        <dbReference type="Rhea" id="RHEA:54605"/>
    </physiologicalReaction>
</comment>
<comment type="catalytic activity">
    <reaction evidence="1">
        <text>3-methylbutanoyl-CoA + 2-oxoglutarate + O2 = 2-hydroxy-3-methylbutanoyl-CoA + succinate + CO2</text>
        <dbReference type="Rhea" id="RHEA:54612"/>
        <dbReference type="ChEBI" id="CHEBI:15379"/>
        <dbReference type="ChEBI" id="CHEBI:16526"/>
        <dbReference type="ChEBI" id="CHEBI:16810"/>
        <dbReference type="ChEBI" id="CHEBI:30031"/>
        <dbReference type="ChEBI" id="CHEBI:57345"/>
        <dbReference type="ChEBI" id="CHEBI:138296"/>
    </reaction>
    <physiologicalReaction direction="left-to-right" evidence="1">
        <dbReference type="Rhea" id="RHEA:54613"/>
    </physiologicalReaction>
</comment>
<comment type="catalytic activity">
    <reaction evidence="1">
        <text>heptadecanoyl-CoA + 2-oxoglutarate + O2 = 2-hydroxyheptadecanoyl-CoA + succinate + CO2</text>
        <dbReference type="Rhea" id="RHEA:54616"/>
        <dbReference type="ChEBI" id="CHEBI:15379"/>
        <dbReference type="ChEBI" id="CHEBI:16526"/>
        <dbReference type="ChEBI" id="CHEBI:16810"/>
        <dbReference type="ChEBI" id="CHEBI:30031"/>
        <dbReference type="ChEBI" id="CHEBI:74307"/>
        <dbReference type="ChEBI" id="CHEBI:138297"/>
    </reaction>
    <physiologicalReaction direction="left-to-right" evidence="1">
        <dbReference type="Rhea" id="RHEA:54617"/>
    </physiologicalReaction>
</comment>
<comment type="catalytic activity">
    <reaction evidence="1">
        <text>eicosanoyl-CoA + 2-oxoglutarate + O2 = 2-hydroxyeicosanoyl-CoA + succinate + CO2</text>
        <dbReference type="Rhea" id="RHEA:54620"/>
        <dbReference type="ChEBI" id="CHEBI:15379"/>
        <dbReference type="ChEBI" id="CHEBI:16526"/>
        <dbReference type="ChEBI" id="CHEBI:16810"/>
        <dbReference type="ChEBI" id="CHEBI:30031"/>
        <dbReference type="ChEBI" id="CHEBI:57380"/>
        <dbReference type="ChEBI" id="CHEBI:138298"/>
    </reaction>
    <physiologicalReaction direction="left-to-right" evidence="1">
        <dbReference type="Rhea" id="RHEA:54621"/>
    </physiologicalReaction>
</comment>
<comment type="catalytic activity">
    <reaction evidence="1">
        <text>octadecanoyl-CoA + 2-oxoglutarate + O2 = 2-hydroxyoctadecanoyl-CoA + succinate + CO2</text>
        <dbReference type="Rhea" id="RHEA:54624"/>
        <dbReference type="ChEBI" id="CHEBI:15379"/>
        <dbReference type="ChEBI" id="CHEBI:16526"/>
        <dbReference type="ChEBI" id="CHEBI:16810"/>
        <dbReference type="ChEBI" id="CHEBI:30031"/>
        <dbReference type="ChEBI" id="CHEBI:57394"/>
        <dbReference type="ChEBI" id="CHEBI:74116"/>
    </reaction>
    <physiologicalReaction direction="left-to-right" evidence="1">
        <dbReference type="Rhea" id="RHEA:54625"/>
    </physiologicalReaction>
</comment>
<comment type="catalytic activity">
    <reaction evidence="1">
        <text>dodecanoyl-CoA + 2-oxoglutarate + O2 = 2-hydroxydodecanoyl-CoA + succinate + CO2</text>
        <dbReference type="Rhea" id="RHEA:54628"/>
        <dbReference type="ChEBI" id="CHEBI:15379"/>
        <dbReference type="ChEBI" id="CHEBI:16526"/>
        <dbReference type="ChEBI" id="CHEBI:16810"/>
        <dbReference type="ChEBI" id="CHEBI:30031"/>
        <dbReference type="ChEBI" id="CHEBI:57375"/>
        <dbReference type="ChEBI" id="CHEBI:138299"/>
    </reaction>
    <physiologicalReaction direction="left-to-right" evidence="1">
        <dbReference type="Rhea" id="RHEA:54629"/>
    </physiologicalReaction>
</comment>
<comment type="catalytic activity">
    <reaction evidence="1">
        <text>tetradecanoyl-CoA + 2-oxoglutarate + O2 = 2-hydroxytetradecanoyl-CoA + succinate + CO2</text>
        <dbReference type="Rhea" id="RHEA:54632"/>
        <dbReference type="ChEBI" id="CHEBI:15379"/>
        <dbReference type="ChEBI" id="CHEBI:16526"/>
        <dbReference type="ChEBI" id="CHEBI:16810"/>
        <dbReference type="ChEBI" id="CHEBI:30031"/>
        <dbReference type="ChEBI" id="CHEBI:57385"/>
        <dbReference type="ChEBI" id="CHEBI:138300"/>
    </reaction>
    <physiologicalReaction direction="left-to-right" evidence="1">
        <dbReference type="Rhea" id="RHEA:54633"/>
    </physiologicalReaction>
</comment>
<comment type="catalytic activity">
    <reaction evidence="1">
        <text>hexanoyl-CoA + 2-oxoglutarate + O2 = 2-hydroxyhexanoyl-CoA + succinate + CO2</text>
        <dbReference type="Rhea" id="RHEA:55172"/>
        <dbReference type="ChEBI" id="CHEBI:15379"/>
        <dbReference type="ChEBI" id="CHEBI:16526"/>
        <dbReference type="ChEBI" id="CHEBI:16810"/>
        <dbReference type="ChEBI" id="CHEBI:30031"/>
        <dbReference type="ChEBI" id="CHEBI:62620"/>
        <dbReference type="ChEBI" id="CHEBI:138630"/>
    </reaction>
    <physiologicalReaction direction="left-to-right" evidence="1">
        <dbReference type="Rhea" id="RHEA:55173"/>
    </physiologicalReaction>
</comment>
<comment type="catalytic activity">
    <reaction evidence="1">
        <text>butanoyl-CoA + 2-oxoglutarate + O2 = 2-hydroxybutanoyl-CoA + succinate + CO2</text>
        <dbReference type="Rhea" id="RHEA:55176"/>
        <dbReference type="ChEBI" id="CHEBI:15379"/>
        <dbReference type="ChEBI" id="CHEBI:16526"/>
        <dbReference type="ChEBI" id="CHEBI:16810"/>
        <dbReference type="ChEBI" id="CHEBI:30031"/>
        <dbReference type="ChEBI" id="CHEBI:57371"/>
        <dbReference type="ChEBI" id="CHEBI:138628"/>
    </reaction>
    <physiologicalReaction direction="left-to-right" evidence="1">
        <dbReference type="Rhea" id="RHEA:55177"/>
    </physiologicalReaction>
</comment>
<comment type="catalytic activity">
    <reaction evidence="1">
        <text>3-methylnonanoyl-CoA + 2-oxoglutarate + O2 = 2-hydroxy-3-methylnonanoyl-CoA + succinate + CO2</text>
        <dbReference type="Rhea" id="RHEA:55180"/>
        <dbReference type="ChEBI" id="CHEBI:15379"/>
        <dbReference type="ChEBI" id="CHEBI:16526"/>
        <dbReference type="ChEBI" id="CHEBI:16810"/>
        <dbReference type="ChEBI" id="CHEBI:30031"/>
        <dbReference type="ChEBI" id="CHEBI:138633"/>
        <dbReference type="ChEBI" id="CHEBI:138634"/>
    </reaction>
    <physiologicalReaction direction="left-to-right" evidence="1">
        <dbReference type="Rhea" id="RHEA:55181"/>
    </physiologicalReaction>
</comment>
<comment type="catalytic activity">
    <reaction evidence="1">
        <text>3-methylundecanoyl-CoA + 2-oxoglutarate + O2 = 2-hydroxy-3-methylundecanoyl-CoA + succinate + CO2</text>
        <dbReference type="Rhea" id="RHEA:55184"/>
        <dbReference type="ChEBI" id="CHEBI:15379"/>
        <dbReference type="ChEBI" id="CHEBI:16526"/>
        <dbReference type="ChEBI" id="CHEBI:16810"/>
        <dbReference type="ChEBI" id="CHEBI:30031"/>
        <dbReference type="ChEBI" id="CHEBI:84183"/>
        <dbReference type="ChEBI" id="CHEBI:138632"/>
    </reaction>
    <physiologicalReaction direction="left-to-right" evidence="1">
        <dbReference type="Rhea" id="RHEA:55185"/>
    </physiologicalReaction>
</comment>
<comment type="catalytic activity">
    <reaction evidence="1">
        <text>3-methyldodecanoyl-CoA + 2-oxoglutarate + O2 = 2-hydroxy-3-methyldodecanoyl-CoA + succinate + CO2</text>
        <dbReference type="Rhea" id="RHEA:55192"/>
        <dbReference type="ChEBI" id="CHEBI:15379"/>
        <dbReference type="ChEBI" id="CHEBI:16526"/>
        <dbReference type="ChEBI" id="CHEBI:16810"/>
        <dbReference type="ChEBI" id="CHEBI:30031"/>
        <dbReference type="ChEBI" id="CHEBI:138636"/>
        <dbReference type="ChEBI" id="CHEBI:138637"/>
    </reaction>
    <physiologicalReaction direction="left-to-right" evidence="1">
        <dbReference type="Rhea" id="RHEA:55193"/>
    </physiologicalReaction>
</comment>
<comment type="cofactor">
    <cofactor evidence="1">
        <name>Fe cation</name>
        <dbReference type="ChEBI" id="CHEBI:24875"/>
    </cofactor>
</comment>
<comment type="cofactor">
    <cofactor evidence="1">
        <name>L-ascorbate</name>
        <dbReference type="ChEBI" id="CHEBI:38290"/>
    </cofactor>
</comment>
<comment type="cofactor">
    <cofactor evidence="1">
        <name>ATP</name>
        <dbReference type="ChEBI" id="CHEBI:30616"/>
    </cofactor>
</comment>
<comment type="cofactor">
    <cofactor evidence="1">
        <name>Mg(2+)</name>
        <dbReference type="ChEBI" id="CHEBI:18420"/>
    </cofactor>
</comment>
<comment type="pathway">
    <text>Lipid metabolism; fatty acid metabolism.</text>
</comment>
<comment type="subunit">
    <text evidence="1 3">Interacts with FKBP52 (By similarity). Interacts with PHYHIP (PubMed:10686344).</text>
</comment>
<comment type="subcellular location">
    <subcellularLocation>
        <location evidence="1">Peroxisome</location>
    </subcellularLocation>
</comment>
<comment type="tissue specificity">
    <text evidence="3">Ubiquitously expressed in all tissues with significant levels detected in the embryonic and neonatal heart and liver. In the adult, significant levels are detected in the liver, kidney, heart, gut, brain and aorta.</text>
</comment>
<comment type="disease">
    <text evidence="4">Defects in Phyh are the cause of lupus nephritis, a severe autoimmune disease. Phyh could be involved in a reaction against the progression of the disease, because its expression is low in the early stage of the disease in the renal cortex of MRL/lpr mice.</text>
</comment>
<comment type="similarity">
    <text evidence="5">Belongs to the PhyH family.</text>
</comment>
<protein>
    <recommendedName>
        <fullName>Phytanoyl-CoA dioxygenase, peroxisomal</fullName>
        <ecNumber evidence="1">1.14.11.18</ecNumber>
    </recommendedName>
    <alternativeName>
        <fullName>Lupus nephritis-associated peptide 1</fullName>
    </alternativeName>
    <alternativeName>
        <fullName>Phytanic acid oxidase</fullName>
    </alternativeName>
    <alternativeName>
        <fullName>Phytanoyl-CoA alpha-hydroxylase</fullName>
        <shortName>PhyH</shortName>
    </alternativeName>
</protein>
<evidence type="ECO:0000250" key="1">
    <source>
        <dbReference type="UniProtKB" id="O14832"/>
    </source>
</evidence>
<evidence type="ECO:0000250" key="2">
    <source>
        <dbReference type="UniProtKB" id="P57093"/>
    </source>
</evidence>
<evidence type="ECO:0000269" key="3">
    <source>
    </source>
</evidence>
<evidence type="ECO:0000269" key="4">
    <source>
    </source>
</evidence>
<evidence type="ECO:0000305" key="5"/>
<evidence type="ECO:0007744" key="6">
    <source>
    </source>
</evidence>
<reference key="1">
    <citation type="journal article" date="1997" name="Nat. Genet.">
        <title>Identification of PAHX, a Refsum disease gene.</title>
        <authorList>
            <person name="Mihalik S.J."/>
            <person name="Morrell J.C."/>
            <person name="Kim D."/>
            <person name="Sachsteder K.A."/>
            <person name="Watkins P.A."/>
            <person name="Gould S.J."/>
        </authorList>
    </citation>
    <scope>NUCLEOTIDE SEQUENCE [MRNA]</scope>
</reference>
<reference key="2">
    <citation type="journal article" date="1996" name="Biochem. Biophys. Res. Commun.">
        <title>Molecular cloning and expression of a novel peptide (LN1) gene: reduced expression in the renal cortex of lupus nephritis in MRL/lpr mouse.</title>
        <authorList>
            <person name="Iwano M."/>
            <person name="Ueno M."/>
            <person name="Miyazaki M."/>
            <person name="Harada T."/>
            <person name="Nagai Y."/>
            <person name="Hirano M."/>
            <person name="Dohi Y."/>
            <person name="Akai Y."/>
            <person name="Kurioka H."/>
            <person name="Dohi K."/>
        </authorList>
    </citation>
    <scope>NUCLEOTIDE SEQUENCE [MRNA]</scope>
    <source>
        <strain>BALB/cJ</strain>
        <tissue>Kidney</tissue>
    </source>
</reference>
<reference key="3">
    <citation type="journal article" date="2004" name="Genome Res.">
        <title>The status, quality, and expansion of the NIH full-length cDNA project: the Mammalian Gene Collection (MGC).</title>
        <authorList>
            <consortium name="The MGC Project Team"/>
        </authorList>
    </citation>
    <scope>NUCLEOTIDE SEQUENCE [LARGE SCALE MRNA]</scope>
    <source>
        <strain>C57BL/6J</strain>
        <tissue>Mammary gland</tissue>
    </source>
</reference>
<reference key="4">
    <citation type="journal article" date="2000" name="Brain Res. Mol. Brain Res.">
        <title>Identification of a brain specific protein that associates with a Refsum disease gene product, phytanoyl-CoA alpha-hydroxylase.</title>
        <authorList>
            <person name="Lee Z.H."/>
            <person name="Kim H.-H."/>
            <person name="Ahn K.Y."/>
            <person name="Seo K.H."/>
            <person name="Kim J.K."/>
            <person name="Bae C.S."/>
            <person name="Kim K.K."/>
        </authorList>
    </citation>
    <scope>TISSUE SPECIFICITY</scope>
    <scope>INTERACTION WITH PHYHIP</scope>
</reference>
<reference key="5">
    <citation type="journal article" date="2010" name="Cell">
        <title>A tissue-specific atlas of mouse protein phosphorylation and expression.</title>
        <authorList>
            <person name="Huttlin E.L."/>
            <person name="Jedrychowski M.P."/>
            <person name="Elias J.E."/>
            <person name="Goswami T."/>
            <person name="Rad R."/>
            <person name="Beausoleil S.A."/>
            <person name="Villen J."/>
            <person name="Haas W."/>
            <person name="Sowa M.E."/>
            <person name="Gygi S.P."/>
        </authorList>
    </citation>
    <scope>IDENTIFICATION BY MASS SPECTROMETRY [LARGE SCALE ANALYSIS]</scope>
    <source>
        <tissue>Heart</tissue>
        <tissue>Kidney</tissue>
        <tissue>Liver</tissue>
        <tissue>Testis</tissue>
    </source>
</reference>
<reference key="6">
    <citation type="journal article" date="2013" name="Mol. Cell">
        <title>SIRT5-mediated lysine desuccinylation impacts diverse metabolic pathways.</title>
        <authorList>
            <person name="Park J."/>
            <person name="Chen Y."/>
            <person name="Tishkoff D.X."/>
            <person name="Peng C."/>
            <person name="Tan M."/>
            <person name="Dai L."/>
            <person name="Xie Z."/>
            <person name="Zhang Y."/>
            <person name="Zwaans B.M."/>
            <person name="Skinner M.E."/>
            <person name="Lombard D.B."/>
            <person name="Zhao Y."/>
        </authorList>
    </citation>
    <scope>SUCCINYLATION [LARGE SCALE ANALYSIS] AT LYS-59; LYS-108; LYS-231 AND LYS-252</scope>
    <scope>IDENTIFICATION BY MASS SPECTROMETRY [LARGE SCALE ANALYSIS]</scope>
    <source>
        <tissue>Liver</tissue>
    </source>
</reference>
<organism>
    <name type="scientific">Mus musculus</name>
    <name type="common">Mouse</name>
    <dbReference type="NCBI Taxonomy" id="10090"/>
    <lineage>
        <taxon>Eukaryota</taxon>
        <taxon>Metazoa</taxon>
        <taxon>Chordata</taxon>
        <taxon>Craniata</taxon>
        <taxon>Vertebrata</taxon>
        <taxon>Euteleostomi</taxon>
        <taxon>Mammalia</taxon>
        <taxon>Eutheria</taxon>
        <taxon>Euarchontoglires</taxon>
        <taxon>Glires</taxon>
        <taxon>Rodentia</taxon>
        <taxon>Myomorpha</taxon>
        <taxon>Muroidea</taxon>
        <taxon>Muridae</taxon>
        <taxon>Murinae</taxon>
        <taxon>Mus</taxon>
        <taxon>Mus</taxon>
    </lineage>
</organism>
<dbReference type="EC" id="1.14.11.18" evidence="1"/>
<dbReference type="EMBL" id="AF023463">
    <property type="protein sequence ID" value="AAB81835.1"/>
    <property type="molecule type" value="mRNA"/>
</dbReference>
<dbReference type="EMBL" id="D88670">
    <property type="protein sequence ID" value="BAA19003.1"/>
    <property type="molecule type" value="mRNA"/>
</dbReference>
<dbReference type="EMBL" id="BC002018">
    <property type="protein sequence ID" value="AAH02018.1"/>
    <property type="molecule type" value="mRNA"/>
</dbReference>
<dbReference type="CCDS" id="CCDS15660.1"/>
<dbReference type="PIR" id="JC5242">
    <property type="entry name" value="JC5242"/>
</dbReference>
<dbReference type="RefSeq" id="NP_034856.1">
    <property type="nucleotide sequence ID" value="NM_010726.2"/>
</dbReference>
<dbReference type="SMR" id="O35386"/>
<dbReference type="BioGRID" id="201185">
    <property type="interactions" value="4"/>
</dbReference>
<dbReference type="FunCoup" id="O35386">
    <property type="interactions" value="449"/>
</dbReference>
<dbReference type="IntAct" id="O35386">
    <property type="interactions" value="1"/>
</dbReference>
<dbReference type="MINT" id="O35386"/>
<dbReference type="STRING" id="10090.ENSMUSP00000027975"/>
<dbReference type="GlyGen" id="O35386">
    <property type="glycosylation" value="1 site, 1 O-linked glycan (1 site)"/>
</dbReference>
<dbReference type="iPTMnet" id="O35386"/>
<dbReference type="PhosphoSitePlus" id="O35386"/>
<dbReference type="SwissPalm" id="O35386"/>
<dbReference type="jPOST" id="O35386"/>
<dbReference type="PaxDb" id="10090-ENSMUSP00000027975"/>
<dbReference type="PeptideAtlas" id="O35386"/>
<dbReference type="ProteomicsDB" id="287938"/>
<dbReference type="Pumba" id="O35386"/>
<dbReference type="ABCD" id="O35386">
    <property type="antibodies" value="1 sequenced antibody"/>
</dbReference>
<dbReference type="Antibodypedia" id="1999">
    <property type="antibodies" value="434 antibodies from 34 providers"/>
</dbReference>
<dbReference type="DNASU" id="16922"/>
<dbReference type="Ensembl" id="ENSMUST00000027975.8">
    <property type="protein sequence ID" value="ENSMUSP00000027975.8"/>
    <property type="gene ID" value="ENSMUSG00000026664.8"/>
</dbReference>
<dbReference type="GeneID" id="16922"/>
<dbReference type="KEGG" id="mmu:16922"/>
<dbReference type="UCSC" id="uc008ifd.2">
    <property type="organism name" value="mouse"/>
</dbReference>
<dbReference type="AGR" id="MGI:891978"/>
<dbReference type="CTD" id="5264"/>
<dbReference type="MGI" id="MGI:891978">
    <property type="gene designation" value="Phyh"/>
</dbReference>
<dbReference type="VEuPathDB" id="HostDB:ENSMUSG00000026664"/>
<dbReference type="eggNOG" id="KOG3290">
    <property type="taxonomic scope" value="Eukaryota"/>
</dbReference>
<dbReference type="GeneTree" id="ENSGT00390000001775"/>
<dbReference type="HOGENOM" id="CLU_060877_0_0_1"/>
<dbReference type="InParanoid" id="O35386"/>
<dbReference type="OMA" id="CCAWTAM"/>
<dbReference type="OrthoDB" id="2328924at2759"/>
<dbReference type="PhylomeDB" id="O35386"/>
<dbReference type="TreeFam" id="TF313667"/>
<dbReference type="Reactome" id="R-MMU-389599">
    <property type="pathway name" value="Alpha-oxidation of phytanate"/>
</dbReference>
<dbReference type="Reactome" id="R-MMU-9033241">
    <property type="pathway name" value="Peroxisomal protein import"/>
</dbReference>
<dbReference type="UniPathway" id="UPA00199"/>
<dbReference type="BioGRID-ORCS" id="16922">
    <property type="hits" value="3 hits in 80 CRISPR screens"/>
</dbReference>
<dbReference type="ChiTaRS" id="Phyh">
    <property type="organism name" value="mouse"/>
</dbReference>
<dbReference type="PRO" id="PR:O35386"/>
<dbReference type="Proteomes" id="UP000000589">
    <property type="component" value="Chromosome 2"/>
</dbReference>
<dbReference type="RNAct" id="O35386">
    <property type="molecule type" value="protein"/>
</dbReference>
<dbReference type="Bgee" id="ENSMUSG00000026664">
    <property type="expression patterns" value="Expressed in lacrimal gland and 271 other cell types or tissues"/>
</dbReference>
<dbReference type="ExpressionAtlas" id="O35386">
    <property type="expression patterns" value="baseline and differential"/>
</dbReference>
<dbReference type="GO" id="GO:0097731">
    <property type="term" value="C:9+0 non-motile cilium"/>
    <property type="evidence" value="ECO:0007669"/>
    <property type="project" value="Ensembl"/>
</dbReference>
<dbReference type="GO" id="GO:0005739">
    <property type="term" value="C:mitochondrion"/>
    <property type="evidence" value="ECO:0007005"/>
    <property type="project" value="MGI"/>
</dbReference>
<dbReference type="GO" id="GO:0005782">
    <property type="term" value="C:peroxisomal matrix"/>
    <property type="evidence" value="ECO:0000304"/>
    <property type="project" value="Reactome"/>
</dbReference>
<dbReference type="GO" id="GO:0005777">
    <property type="term" value="C:peroxisome"/>
    <property type="evidence" value="ECO:0000304"/>
    <property type="project" value="MGI"/>
</dbReference>
<dbReference type="GO" id="GO:0003824">
    <property type="term" value="F:catalytic activity"/>
    <property type="evidence" value="ECO:0000314"/>
    <property type="project" value="MGI"/>
</dbReference>
<dbReference type="GO" id="GO:0008198">
    <property type="term" value="F:ferrous iron binding"/>
    <property type="evidence" value="ECO:0007669"/>
    <property type="project" value="Ensembl"/>
</dbReference>
<dbReference type="GO" id="GO:0031418">
    <property type="term" value="F:L-ascorbic acid binding"/>
    <property type="evidence" value="ECO:0007669"/>
    <property type="project" value="UniProtKB-KW"/>
</dbReference>
<dbReference type="GO" id="GO:0048244">
    <property type="term" value="F:phytanoyl-CoA dioxygenase activity"/>
    <property type="evidence" value="ECO:0007669"/>
    <property type="project" value="UniProtKB-EC"/>
</dbReference>
<dbReference type="GO" id="GO:0019606">
    <property type="term" value="P:2-oxobutyrate catabolic process"/>
    <property type="evidence" value="ECO:0007669"/>
    <property type="project" value="Ensembl"/>
</dbReference>
<dbReference type="GO" id="GO:0006103">
    <property type="term" value="P:2-oxoglutarate metabolic process"/>
    <property type="evidence" value="ECO:0007669"/>
    <property type="project" value="Ensembl"/>
</dbReference>
<dbReference type="GO" id="GO:0001561">
    <property type="term" value="P:fatty acid alpha-oxidation"/>
    <property type="evidence" value="ECO:0000314"/>
    <property type="project" value="MGI"/>
</dbReference>
<dbReference type="GO" id="GO:0006720">
    <property type="term" value="P:isoprenoid metabolic process"/>
    <property type="evidence" value="ECO:0007669"/>
    <property type="project" value="Ensembl"/>
</dbReference>
<dbReference type="GO" id="GO:0097089">
    <property type="term" value="P:methyl-branched fatty acid metabolic process"/>
    <property type="evidence" value="ECO:0007669"/>
    <property type="project" value="Ensembl"/>
</dbReference>
<dbReference type="FunFam" id="2.60.120.620:FF:000012">
    <property type="entry name" value="Phytanoyl-CoA dioxygenase, peroxisomal"/>
    <property type="match status" value="1"/>
</dbReference>
<dbReference type="Gene3D" id="2.60.120.620">
    <property type="entry name" value="q2cbj1_9rhob like domain"/>
    <property type="match status" value="1"/>
</dbReference>
<dbReference type="InterPro" id="IPR047128">
    <property type="entry name" value="PhyH"/>
</dbReference>
<dbReference type="InterPro" id="IPR008775">
    <property type="entry name" value="Phytyl_CoA_dOase-like"/>
</dbReference>
<dbReference type="PANTHER" id="PTHR21308">
    <property type="entry name" value="PHYTANOYL-COA ALPHA-HYDROXYLASE"/>
    <property type="match status" value="1"/>
</dbReference>
<dbReference type="PANTHER" id="PTHR21308:SF1">
    <property type="entry name" value="PHYTANOYL-COA DIOXYGENASE, PEROXISOMAL"/>
    <property type="match status" value="1"/>
</dbReference>
<dbReference type="Pfam" id="PF05721">
    <property type="entry name" value="PhyH"/>
    <property type="match status" value="1"/>
</dbReference>
<dbReference type="SUPFAM" id="SSF51197">
    <property type="entry name" value="Clavaminate synthase-like"/>
    <property type="match status" value="1"/>
</dbReference>
<feature type="transit peptide" description="Peroxisome" evidence="2">
    <location>
        <begin position="1"/>
        <end position="30"/>
    </location>
</feature>
<feature type="chain" id="PRO_0000024054" description="Phytanoyl-CoA dioxygenase, peroxisomal">
    <location>
        <begin position="31"/>
        <end position="338"/>
    </location>
</feature>
<feature type="binding site" evidence="1">
    <location>
        <position position="120"/>
    </location>
    <ligand>
        <name>2-oxoglutarate</name>
        <dbReference type="ChEBI" id="CHEBI:16810"/>
    </ligand>
</feature>
<feature type="binding site" evidence="1">
    <location>
        <position position="157"/>
    </location>
    <ligand>
        <name>2-oxoglutarate</name>
        <dbReference type="ChEBI" id="CHEBI:16810"/>
    </ligand>
</feature>
<feature type="binding site" evidence="1">
    <location>
        <begin position="175"/>
        <end position="177"/>
    </location>
    <ligand>
        <name>2-oxoglutarate</name>
        <dbReference type="ChEBI" id="CHEBI:16810"/>
    </ligand>
</feature>
<feature type="binding site" evidence="1">
    <location>
        <position position="175"/>
    </location>
    <ligand>
        <name>Fe cation</name>
        <dbReference type="ChEBI" id="CHEBI:24875"/>
    </ligand>
</feature>
<feature type="binding site" evidence="1">
    <location>
        <position position="177"/>
    </location>
    <ligand>
        <name>Fe cation</name>
        <dbReference type="ChEBI" id="CHEBI:24875"/>
    </ligand>
</feature>
<feature type="binding site" evidence="1">
    <location>
        <position position="193"/>
    </location>
    <ligand>
        <name>2-oxoglutarate</name>
        <dbReference type="ChEBI" id="CHEBI:16810"/>
    </ligand>
</feature>
<feature type="binding site" evidence="1">
    <location>
        <position position="264"/>
    </location>
    <ligand>
        <name>Fe cation</name>
        <dbReference type="ChEBI" id="CHEBI:24875"/>
    </ligand>
</feature>
<feature type="binding site" evidence="1">
    <location>
        <position position="266"/>
    </location>
    <ligand>
        <name>2-oxoglutarate</name>
        <dbReference type="ChEBI" id="CHEBI:16810"/>
    </ligand>
</feature>
<feature type="binding site" evidence="1">
    <location>
        <position position="275"/>
    </location>
    <ligand>
        <name>2-oxoglutarate</name>
        <dbReference type="ChEBI" id="CHEBI:16810"/>
    </ligand>
</feature>
<feature type="modified residue" description="N6-succinyllysine" evidence="6">
    <location>
        <position position="59"/>
    </location>
</feature>
<feature type="modified residue" description="N6-succinyllysine" evidence="6">
    <location>
        <position position="108"/>
    </location>
</feature>
<feature type="modified residue" description="N6-succinyllysine" evidence="6">
    <location>
        <position position="231"/>
    </location>
</feature>
<feature type="modified residue" description="N6-succinyllysine" evidence="6">
    <location>
        <position position="252"/>
    </location>
</feature>
<feature type="sequence conflict" description="In Ref. 2; BAA19003." evidence="5" ref="2">
    <original>N</original>
    <variation>K</variation>
    <location>
        <position position="2"/>
    </location>
</feature>